<organism>
    <name type="scientific">Schizosaccharomyces pombe (strain 972 / ATCC 24843)</name>
    <name type="common">Fission yeast</name>
    <dbReference type="NCBI Taxonomy" id="284812"/>
    <lineage>
        <taxon>Eukaryota</taxon>
        <taxon>Fungi</taxon>
        <taxon>Dikarya</taxon>
        <taxon>Ascomycota</taxon>
        <taxon>Taphrinomycotina</taxon>
        <taxon>Schizosaccharomycetes</taxon>
        <taxon>Schizosaccharomycetales</taxon>
        <taxon>Schizosaccharomycetaceae</taxon>
        <taxon>Schizosaccharomyces</taxon>
    </lineage>
</organism>
<dbReference type="EC" id="2.1.1.-" evidence="1"/>
<dbReference type="EMBL" id="CU329670">
    <property type="protein sequence ID" value="CAB16366.3"/>
    <property type="molecule type" value="Genomic_DNA"/>
</dbReference>
<dbReference type="PIR" id="T38517">
    <property type="entry name" value="T38517"/>
</dbReference>
<dbReference type="RefSeq" id="NP_594509.3">
    <property type="nucleotide sequence ID" value="NM_001019938.3"/>
</dbReference>
<dbReference type="SMR" id="O14039"/>
<dbReference type="BioGRID" id="279084">
    <property type="interactions" value="6"/>
</dbReference>
<dbReference type="FunCoup" id="O14039">
    <property type="interactions" value="358"/>
</dbReference>
<dbReference type="STRING" id="284812.O14039"/>
<dbReference type="PaxDb" id="4896-SPAC2C4.06c.1"/>
<dbReference type="EnsemblFungi" id="SPAC2C4.06c.1">
    <property type="protein sequence ID" value="SPAC2C4.06c.1:pep"/>
    <property type="gene ID" value="SPAC2C4.06c"/>
</dbReference>
<dbReference type="GeneID" id="2542630"/>
<dbReference type="KEGG" id="spo:2542630"/>
<dbReference type="PomBase" id="SPAC2C4.06c">
    <property type="gene designation" value="rcm1"/>
</dbReference>
<dbReference type="VEuPathDB" id="FungiDB:SPAC2C4.06c"/>
<dbReference type="eggNOG" id="KOG2360">
    <property type="taxonomic scope" value="Eukaryota"/>
</dbReference>
<dbReference type="HOGENOM" id="CLU_005316_7_4_1"/>
<dbReference type="InParanoid" id="O14039"/>
<dbReference type="OMA" id="MNFYQHA"/>
<dbReference type="PRO" id="PR:O14039"/>
<dbReference type="Proteomes" id="UP000002485">
    <property type="component" value="Chromosome I"/>
</dbReference>
<dbReference type="GO" id="GO:0005730">
    <property type="term" value="C:nucleolus"/>
    <property type="evidence" value="ECO:0007005"/>
    <property type="project" value="PomBase"/>
</dbReference>
<dbReference type="GO" id="GO:0005634">
    <property type="term" value="C:nucleus"/>
    <property type="evidence" value="ECO:0007005"/>
    <property type="project" value="PomBase"/>
</dbReference>
<dbReference type="GO" id="GO:0003723">
    <property type="term" value="F:RNA binding"/>
    <property type="evidence" value="ECO:0007669"/>
    <property type="project" value="UniProtKB-KW"/>
</dbReference>
<dbReference type="GO" id="GO:0009383">
    <property type="term" value="F:rRNA (cytosine-C5-)-methyltransferase activity"/>
    <property type="evidence" value="ECO:0000266"/>
    <property type="project" value="PomBase"/>
</dbReference>
<dbReference type="GO" id="GO:0070475">
    <property type="term" value="P:rRNA base methylation"/>
    <property type="evidence" value="ECO:0000318"/>
    <property type="project" value="GO_Central"/>
</dbReference>
<dbReference type="CDD" id="cd02440">
    <property type="entry name" value="AdoMet_MTases"/>
    <property type="match status" value="1"/>
</dbReference>
<dbReference type="FunFam" id="3.40.50.150:FF:000164">
    <property type="entry name" value="Methyltransferase NSUN5, putative"/>
    <property type="match status" value="1"/>
</dbReference>
<dbReference type="Gene3D" id="3.30.70.1170">
    <property type="entry name" value="Sun protein, domain 3"/>
    <property type="match status" value="1"/>
</dbReference>
<dbReference type="Gene3D" id="3.40.50.150">
    <property type="entry name" value="Vaccinia Virus protein VP39"/>
    <property type="match status" value="1"/>
</dbReference>
<dbReference type="InterPro" id="IPR049560">
    <property type="entry name" value="MeTrfase_RsmB-F_NOP2_cat"/>
</dbReference>
<dbReference type="InterPro" id="IPR001678">
    <property type="entry name" value="MeTrfase_RsmB-F_NOP2_dom"/>
</dbReference>
<dbReference type="InterPro" id="IPR049561">
    <property type="entry name" value="NSUN5_7_fdxn-like"/>
</dbReference>
<dbReference type="InterPro" id="IPR048889">
    <property type="entry name" value="NSUN5_RCM1_N"/>
</dbReference>
<dbReference type="InterPro" id="IPR023267">
    <property type="entry name" value="RCMT"/>
</dbReference>
<dbReference type="InterPro" id="IPR029063">
    <property type="entry name" value="SAM-dependent_MTases_sf"/>
</dbReference>
<dbReference type="PANTHER" id="PTHR22807:SF4">
    <property type="entry name" value="28S RRNA (CYTOSINE-C(5))-METHYLTRANSFERASE"/>
    <property type="match status" value="1"/>
</dbReference>
<dbReference type="PANTHER" id="PTHR22807">
    <property type="entry name" value="NOP2 YEAST -RELATED NOL1/NOP2/FMU SUN DOMAIN-CONTAINING"/>
    <property type="match status" value="1"/>
</dbReference>
<dbReference type="Pfam" id="PF01189">
    <property type="entry name" value="Methyltr_RsmB-F"/>
    <property type="match status" value="1"/>
</dbReference>
<dbReference type="Pfam" id="PF21148">
    <property type="entry name" value="NSUN5_fdxn-like"/>
    <property type="match status" value="1"/>
</dbReference>
<dbReference type="Pfam" id="PF21153">
    <property type="entry name" value="NSUN5_N"/>
    <property type="match status" value="1"/>
</dbReference>
<dbReference type="PRINTS" id="PR02008">
    <property type="entry name" value="RCMTFAMILY"/>
</dbReference>
<dbReference type="SUPFAM" id="SSF53335">
    <property type="entry name" value="S-adenosyl-L-methionine-dependent methyltransferases"/>
    <property type="match status" value="1"/>
</dbReference>
<dbReference type="PROSITE" id="PS51686">
    <property type="entry name" value="SAM_MT_RSMB_NOP"/>
    <property type="match status" value="1"/>
</dbReference>
<evidence type="ECO:0000250" key="1">
    <source>
        <dbReference type="UniProtKB" id="P53972"/>
    </source>
</evidence>
<evidence type="ECO:0000255" key="2">
    <source>
        <dbReference type="PROSITE-ProRule" id="PRU01023"/>
    </source>
</evidence>
<evidence type="ECO:0000256" key="3">
    <source>
        <dbReference type="SAM" id="MobiDB-lite"/>
    </source>
</evidence>
<evidence type="ECO:0000269" key="4">
    <source>
    </source>
</evidence>
<gene>
    <name type="primary">rcm1</name>
    <name type="ORF">SPAC2C4.06c</name>
</gene>
<name>RCM1_SCHPO</name>
<reference key="1">
    <citation type="journal article" date="2002" name="Nature">
        <title>The genome sequence of Schizosaccharomyces pombe.</title>
        <authorList>
            <person name="Wood V."/>
            <person name="Gwilliam R."/>
            <person name="Rajandream M.A."/>
            <person name="Lyne M.H."/>
            <person name="Lyne R."/>
            <person name="Stewart A."/>
            <person name="Sgouros J.G."/>
            <person name="Peat N."/>
            <person name="Hayles J."/>
            <person name="Baker S.G."/>
            <person name="Basham D."/>
            <person name="Bowman S."/>
            <person name="Brooks K."/>
            <person name="Brown D."/>
            <person name="Brown S."/>
            <person name="Chillingworth T."/>
            <person name="Churcher C.M."/>
            <person name="Collins M."/>
            <person name="Connor R."/>
            <person name="Cronin A."/>
            <person name="Davis P."/>
            <person name="Feltwell T."/>
            <person name="Fraser A."/>
            <person name="Gentles S."/>
            <person name="Goble A."/>
            <person name="Hamlin N."/>
            <person name="Harris D.E."/>
            <person name="Hidalgo J."/>
            <person name="Hodgson G."/>
            <person name="Holroyd S."/>
            <person name="Hornsby T."/>
            <person name="Howarth S."/>
            <person name="Huckle E.J."/>
            <person name="Hunt S."/>
            <person name="Jagels K."/>
            <person name="James K.D."/>
            <person name="Jones L."/>
            <person name="Jones M."/>
            <person name="Leather S."/>
            <person name="McDonald S."/>
            <person name="McLean J."/>
            <person name="Mooney P."/>
            <person name="Moule S."/>
            <person name="Mungall K.L."/>
            <person name="Murphy L.D."/>
            <person name="Niblett D."/>
            <person name="Odell C."/>
            <person name="Oliver K."/>
            <person name="O'Neil S."/>
            <person name="Pearson D."/>
            <person name="Quail M.A."/>
            <person name="Rabbinowitsch E."/>
            <person name="Rutherford K.M."/>
            <person name="Rutter S."/>
            <person name="Saunders D."/>
            <person name="Seeger K."/>
            <person name="Sharp S."/>
            <person name="Skelton J."/>
            <person name="Simmonds M.N."/>
            <person name="Squares R."/>
            <person name="Squares S."/>
            <person name="Stevens K."/>
            <person name="Taylor K."/>
            <person name="Taylor R.G."/>
            <person name="Tivey A."/>
            <person name="Walsh S.V."/>
            <person name="Warren T."/>
            <person name="Whitehead S."/>
            <person name="Woodward J.R."/>
            <person name="Volckaert G."/>
            <person name="Aert R."/>
            <person name="Robben J."/>
            <person name="Grymonprez B."/>
            <person name="Weltjens I."/>
            <person name="Vanstreels E."/>
            <person name="Rieger M."/>
            <person name="Schaefer M."/>
            <person name="Mueller-Auer S."/>
            <person name="Gabel C."/>
            <person name="Fuchs M."/>
            <person name="Duesterhoeft A."/>
            <person name="Fritzc C."/>
            <person name="Holzer E."/>
            <person name="Moestl D."/>
            <person name="Hilbert H."/>
            <person name="Borzym K."/>
            <person name="Langer I."/>
            <person name="Beck A."/>
            <person name="Lehrach H."/>
            <person name="Reinhardt R."/>
            <person name="Pohl T.M."/>
            <person name="Eger P."/>
            <person name="Zimmermann W."/>
            <person name="Wedler H."/>
            <person name="Wambutt R."/>
            <person name="Purnelle B."/>
            <person name="Goffeau A."/>
            <person name="Cadieu E."/>
            <person name="Dreano S."/>
            <person name="Gloux S."/>
            <person name="Lelaure V."/>
            <person name="Mottier S."/>
            <person name="Galibert F."/>
            <person name="Aves S.J."/>
            <person name="Xiang Z."/>
            <person name="Hunt C."/>
            <person name="Moore K."/>
            <person name="Hurst S.M."/>
            <person name="Lucas M."/>
            <person name="Rochet M."/>
            <person name="Gaillardin C."/>
            <person name="Tallada V.A."/>
            <person name="Garzon A."/>
            <person name="Thode G."/>
            <person name="Daga R.R."/>
            <person name="Cruzado L."/>
            <person name="Jimenez J."/>
            <person name="Sanchez M."/>
            <person name="del Rey F."/>
            <person name="Benito J."/>
            <person name="Dominguez A."/>
            <person name="Revuelta J.L."/>
            <person name="Moreno S."/>
            <person name="Armstrong J."/>
            <person name="Forsburg S.L."/>
            <person name="Cerutti L."/>
            <person name="Lowe T."/>
            <person name="McCombie W.R."/>
            <person name="Paulsen I."/>
            <person name="Potashkin J."/>
            <person name="Shpakovski G.V."/>
            <person name="Ussery D."/>
            <person name="Barrell B.G."/>
            <person name="Nurse P."/>
        </authorList>
    </citation>
    <scope>NUCLEOTIDE SEQUENCE [LARGE SCALE GENOMIC DNA]</scope>
    <source>
        <strain>972 / ATCC 24843</strain>
    </source>
</reference>
<reference key="2">
    <citation type="journal article" date="2011" name="Science">
        <title>Comparative functional genomics of the fission yeasts.</title>
        <authorList>
            <person name="Rhind N."/>
            <person name="Chen Z."/>
            <person name="Yassour M."/>
            <person name="Thompson D.A."/>
            <person name="Haas B.J."/>
            <person name="Habib N."/>
            <person name="Wapinski I."/>
            <person name="Roy S."/>
            <person name="Lin M.F."/>
            <person name="Heiman D.I."/>
            <person name="Young S.K."/>
            <person name="Furuya K."/>
            <person name="Guo Y."/>
            <person name="Pidoux A."/>
            <person name="Chen H.M."/>
            <person name="Robbertse B."/>
            <person name="Goldberg J.M."/>
            <person name="Aoki K."/>
            <person name="Bayne E.H."/>
            <person name="Berlin A.M."/>
            <person name="Desjardins C.A."/>
            <person name="Dobbs E."/>
            <person name="Dukaj L."/>
            <person name="Fan L."/>
            <person name="FitzGerald M.G."/>
            <person name="French C."/>
            <person name="Gujja S."/>
            <person name="Hansen K."/>
            <person name="Keifenheim D."/>
            <person name="Levin J.Z."/>
            <person name="Mosher R.A."/>
            <person name="Mueller C.A."/>
            <person name="Pfiffner J."/>
            <person name="Priest M."/>
            <person name="Russ C."/>
            <person name="Smialowska A."/>
            <person name="Swoboda P."/>
            <person name="Sykes S.M."/>
            <person name="Vaughn M."/>
            <person name="Vengrova S."/>
            <person name="Yoder R."/>
            <person name="Zeng Q."/>
            <person name="Allshire R."/>
            <person name="Baulcombe D."/>
            <person name="Birren B.W."/>
            <person name="Brown W."/>
            <person name="Ekwall K."/>
            <person name="Kellis M."/>
            <person name="Leatherwood J."/>
            <person name="Levin H."/>
            <person name="Margalit H."/>
            <person name="Martienssen R."/>
            <person name="Nieduszynski C.A."/>
            <person name="Spatafora J.W."/>
            <person name="Friedman N."/>
            <person name="Dalgaard J.Z."/>
            <person name="Baumann P."/>
            <person name="Niki H."/>
            <person name="Regev A."/>
            <person name="Nusbaum C."/>
        </authorList>
    </citation>
    <scope>REVISION OF GENE MODEL</scope>
</reference>
<reference key="3">
    <citation type="journal article" date="2006" name="Nat. Biotechnol.">
        <title>ORFeome cloning and global analysis of protein localization in the fission yeast Schizosaccharomyces pombe.</title>
        <authorList>
            <person name="Matsuyama A."/>
            <person name="Arai R."/>
            <person name="Yashiroda Y."/>
            <person name="Shirai A."/>
            <person name="Kamata A."/>
            <person name="Sekido S."/>
            <person name="Kobayashi Y."/>
            <person name="Hashimoto A."/>
            <person name="Hamamoto M."/>
            <person name="Hiraoka Y."/>
            <person name="Horinouchi S."/>
            <person name="Yoshida M."/>
        </authorList>
    </citation>
    <scope>SUBCELLULAR LOCATION [LARGE SCALE ANALYSIS]</scope>
</reference>
<proteinExistence type="inferred from homology"/>
<accession>O14039</accession>
<comment type="function">
    <text evidence="1">S-adenosyl-L-methionine-dependent methyltransferase that specifically methylates the C(5) position of a cytosine in 25S rRNA.</text>
</comment>
<comment type="catalytic activity">
    <reaction evidence="1">
        <text>a cytidine in 25S rRNA + S-adenosyl-L-methionine = a 5-methylcytidine in 25S rRNA + S-adenosyl-L-homocysteine + H(+)</text>
        <dbReference type="Rhea" id="RHEA:47780"/>
        <dbReference type="Rhea" id="RHEA-COMP:11911"/>
        <dbReference type="Rhea" id="RHEA-COMP:11912"/>
        <dbReference type="ChEBI" id="CHEBI:15378"/>
        <dbReference type="ChEBI" id="CHEBI:57856"/>
        <dbReference type="ChEBI" id="CHEBI:59789"/>
        <dbReference type="ChEBI" id="CHEBI:74483"/>
        <dbReference type="ChEBI" id="CHEBI:82748"/>
    </reaction>
</comment>
<comment type="subunit">
    <text evidence="1">Interacts with trm112.</text>
</comment>
<comment type="subcellular location">
    <subcellularLocation>
        <location evidence="4">Nucleus</location>
        <location evidence="4">Nucleolus</location>
    </subcellularLocation>
</comment>
<comment type="similarity">
    <text evidence="2">Belongs to the class I-like SAM-binding methyltransferase superfamily. RsmB/NOP family.</text>
</comment>
<feature type="chain" id="PRO_0000317150" description="25S rRNA (cytosine-C(5))-methyltransferase rcm1">
    <location>
        <begin position="1"/>
        <end position="460"/>
    </location>
</feature>
<feature type="region of interest" description="Disordered" evidence="3">
    <location>
        <begin position="430"/>
        <end position="460"/>
    </location>
</feature>
<feature type="compositionally biased region" description="Basic and acidic residues" evidence="3">
    <location>
        <begin position="430"/>
        <end position="439"/>
    </location>
</feature>
<feature type="compositionally biased region" description="Basic residues" evidence="3">
    <location>
        <begin position="440"/>
        <end position="460"/>
    </location>
</feature>
<feature type="active site" description="Nucleophile" evidence="2">
    <location>
        <position position="350"/>
    </location>
</feature>
<feature type="binding site" evidence="2">
    <location>
        <begin position="223"/>
        <end position="229"/>
    </location>
    <ligand>
        <name>S-adenosyl-L-methionine</name>
        <dbReference type="ChEBI" id="CHEBI:59789"/>
    </ligand>
</feature>
<feature type="binding site" evidence="2">
    <location>
        <position position="246"/>
    </location>
    <ligand>
        <name>S-adenosyl-L-methionine</name>
        <dbReference type="ChEBI" id="CHEBI:59789"/>
    </ligand>
</feature>
<feature type="binding site" evidence="2">
    <location>
        <position position="273"/>
    </location>
    <ligand>
        <name>S-adenosyl-L-methionine</name>
        <dbReference type="ChEBI" id="CHEBI:59789"/>
    </ligand>
</feature>
<feature type="binding site" evidence="2">
    <location>
        <position position="293"/>
    </location>
    <ligand>
        <name>S-adenosyl-L-methionine</name>
        <dbReference type="ChEBI" id="CHEBI:59789"/>
    </ligand>
</feature>
<sequence length="460" mass="51877">MDFYNHAANILSDLSKKKGSIKQLAFNSKKHDPKRTYALVCETLKYKPVLDEIIARSELLVLEKKLKENLARVLVHDLLMSKRGLSISNGPIKECILRHKTRLNAEFVKLKVKKGVKSHEELALKNPVSLPRWLRINTIKSTKDEVLQGLGLDKVSSIEELGPDKFYIDDCVENLIAIDPSFPIVENSLYKEGKVIIQDKASCFPAAVLAGLTGHVGDIIDGCAAPGNKTTHLAACFPKSHIFAFERDAKRVQTLRKMVGISGANNVTIEHQDFTLTDPKSDLYRNVTHILLDPSCSGSGIVSRQDYLLGNEQDVTEDTERLENLCSFQSTILKHALQFPNCRHVTYSTCSVHRLENEQVVCEVLSQEPDWKCNSLTKTLPNWKTRGIPEYCAQPSMAEGMIRCKPGAGGTIGFFVANLYHPQREQETFKMYKNDDDTKKRKRKKKKKEVKKKARIQGEE</sequence>
<keyword id="KW-0489">Methyltransferase</keyword>
<keyword id="KW-0539">Nucleus</keyword>
<keyword id="KW-1185">Reference proteome</keyword>
<keyword id="KW-0694">RNA-binding</keyword>
<keyword id="KW-0949">S-adenosyl-L-methionine</keyword>
<keyword id="KW-0808">Transferase</keyword>
<protein>
    <recommendedName>
        <fullName>25S rRNA (cytosine-C(5))-methyltransferase rcm1</fullName>
        <ecNumber evidence="1">2.1.1.-</ecNumber>
    </recommendedName>
    <alternativeName>
        <fullName>rRNA m(5)C methyltransferase 1</fullName>
    </alternativeName>
</protein>